<feature type="chain" id="PRO_0000129178" description="Large ribosomal subunit protein uL4">
    <location>
        <begin position="1"/>
        <end position="199"/>
    </location>
</feature>
<organism>
    <name type="scientific">Aquifex pyrophilus</name>
    <dbReference type="NCBI Taxonomy" id="2714"/>
    <lineage>
        <taxon>Bacteria</taxon>
        <taxon>Pseudomonadati</taxon>
        <taxon>Aquificota</taxon>
        <taxon>Aquificia</taxon>
        <taxon>Aquificales</taxon>
        <taxon>Aquificaceae</taxon>
        <taxon>Aquifex</taxon>
    </lineage>
</organism>
<comment type="function">
    <text evidence="1">One of the primary rRNA binding proteins, this protein initially binds near the 5'-end of the 23S rRNA. It is important during the early stages of 50S assembly. It makes multiple contacts with different domains of the 23S rRNA in the assembled 50S subunit and ribosome.</text>
</comment>
<comment type="function">
    <text evidence="1">Forms part of the polypeptide exit tunnel.</text>
</comment>
<comment type="subunit">
    <text evidence="1">Part of the 50S ribosomal subunit.</text>
</comment>
<comment type="similarity">
    <text evidence="1">Belongs to the universal ribosomal protein uL4 family.</text>
</comment>
<sequence length="199" mass="22665">MKIGDVEVRDDVFNVKVKKHVLWEVVKWQLAKRRQGTHSTKTRGEVAYSGRKILPQKGTGNARHGERGVNIFVGGGVAHGPKPRDYEYPLPKKVRKLGLKMALSDKAQNDAIMFVDNIDLGEQPKTKKAVEFLKNLGVDKETLLIVIPEKNEVLYKSFRNLQNVRVLLPEGLNVYDVLWANKLVIHKECLDRIYKKVEA</sequence>
<gene>
    <name evidence="1" type="primary">rplD</name>
    <name evidence="1" type="synonym">rpl4</name>
</gene>
<evidence type="ECO:0000255" key="1">
    <source>
        <dbReference type="HAMAP-Rule" id="MF_01328"/>
    </source>
</evidence>
<evidence type="ECO:0000305" key="2"/>
<protein>
    <recommendedName>
        <fullName evidence="1">Large ribosomal subunit protein uL4</fullName>
    </recommendedName>
    <alternativeName>
        <fullName evidence="2">50S ribosomal protein L4</fullName>
    </alternativeName>
</protein>
<name>RL4_AQUPY</name>
<dbReference type="EMBL" id="AF040100">
    <property type="protein sequence ID" value="AAD08786.1"/>
    <property type="molecule type" value="Genomic_DNA"/>
</dbReference>
<dbReference type="SMR" id="Q9ZI49"/>
<dbReference type="GO" id="GO:1990904">
    <property type="term" value="C:ribonucleoprotein complex"/>
    <property type="evidence" value="ECO:0007669"/>
    <property type="project" value="UniProtKB-KW"/>
</dbReference>
<dbReference type="GO" id="GO:0005840">
    <property type="term" value="C:ribosome"/>
    <property type="evidence" value="ECO:0007669"/>
    <property type="project" value="UniProtKB-KW"/>
</dbReference>
<dbReference type="GO" id="GO:0019843">
    <property type="term" value="F:rRNA binding"/>
    <property type="evidence" value="ECO:0007669"/>
    <property type="project" value="UniProtKB-UniRule"/>
</dbReference>
<dbReference type="GO" id="GO:0003735">
    <property type="term" value="F:structural constituent of ribosome"/>
    <property type="evidence" value="ECO:0007669"/>
    <property type="project" value="InterPro"/>
</dbReference>
<dbReference type="GO" id="GO:0006412">
    <property type="term" value="P:translation"/>
    <property type="evidence" value="ECO:0007669"/>
    <property type="project" value="UniProtKB-UniRule"/>
</dbReference>
<dbReference type="FunFam" id="3.40.1370.10:FF:000004">
    <property type="entry name" value="50S ribosomal protein L4"/>
    <property type="match status" value="1"/>
</dbReference>
<dbReference type="Gene3D" id="3.40.1370.10">
    <property type="match status" value="1"/>
</dbReference>
<dbReference type="HAMAP" id="MF_01328_B">
    <property type="entry name" value="Ribosomal_uL4_B"/>
    <property type="match status" value="1"/>
</dbReference>
<dbReference type="InterPro" id="IPR002136">
    <property type="entry name" value="Ribosomal_uL4"/>
</dbReference>
<dbReference type="InterPro" id="IPR013005">
    <property type="entry name" value="Ribosomal_uL4-like"/>
</dbReference>
<dbReference type="InterPro" id="IPR023574">
    <property type="entry name" value="Ribosomal_uL4_dom_sf"/>
</dbReference>
<dbReference type="NCBIfam" id="TIGR03953">
    <property type="entry name" value="rplD_bact"/>
    <property type="match status" value="1"/>
</dbReference>
<dbReference type="PANTHER" id="PTHR10746">
    <property type="entry name" value="50S RIBOSOMAL PROTEIN L4"/>
    <property type="match status" value="1"/>
</dbReference>
<dbReference type="PANTHER" id="PTHR10746:SF6">
    <property type="entry name" value="LARGE RIBOSOMAL SUBUNIT PROTEIN UL4M"/>
    <property type="match status" value="1"/>
</dbReference>
<dbReference type="Pfam" id="PF00573">
    <property type="entry name" value="Ribosomal_L4"/>
    <property type="match status" value="1"/>
</dbReference>
<dbReference type="SUPFAM" id="SSF52166">
    <property type="entry name" value="Ribosomal protein L4"/>
    <property type="match status" value="1"/>
</dbReference>
<reference key="1">
    <citation type="journal article" date="2000" name="J. Mol. Evol.">
        <title>Phylogenetic depth of the bacterial genera Aquifex and Thermotoga inferred from analysis of ribosomal protein, elongation factor, and RNA polymerase subunit sequences.</title>
        <authorList>
            <person name="Bocchetta M."/>
            <person name="Gribaldo S."/>
            <person name="Sanangelantoni A.M."/>
            <person name="Cammarano P."/>
        </authorList>
    </citation>
    <scope>NUCLEOTIDE SEQUENCE [GENOMIC DNA]</scope>
    <source>
        <strain>DSM 6858 / JCM 9492 / Kol5A</strain>
    </source>
</reference>
<accession>Q9ZI49</accession>
<keyword id="KW-0687">Ribonucleoprotein</keyword>
<keyword id="KW-0689">Ribosomal protein</keyword>
<keyword id="KW-0694">RNA-binding</keyword>
<keyword id="KW-0699">rRNA-binding</keyword>
<proteinExistence type="inferred from homology"/>